<reference key="1">
    <citation type="journal article" date="2013" name="Plant Physiol.">
        <title>A Nostoc punctiforme Sugar Transporter Necessary to Establish a Cyanobacterium-Plant Symbiosis.</title>
        <authorList>
            <person name="Ekman M."/>
            <person name="Picossi S."/>
            <person name="Campbell E.L."/>
            <person name="Meeks J.C."/>
            <person name="Flores E."/>
        </authorList>
    </citation>
    <scope>NUCLEOTIDE SEQUENCE [LARGE SCALE GENOMIC DNA]</scope>
    <source>
        <strain>ATCC 29133 / PCC 73102</strain>
    </source>
</reference>
<sequence>MQFIDQAKIEVEAGKGGDGIVAFRREKYVPTGGPSGGNGGRGGSVFFVADENLQTLLDFRYNHRFQAEKGTRGGPNNCTGAGGKDLIIEVPCGTTIYDAETGELLGDLTEPQQTLLIAQGGKGGLGNQHFLSNRNRAPEYALPGLPGEIKQLRLELKLLAEVGIIGLPNAGKSTLISSLSAARPKIADYPFTTLIPNLGVVRKPTGDGTVFADIPGLIAGASHGAGLGHDFLRHIERTRVLLHLIDATSDDVIRDYNTIKEELQAYGQGLAERPQILALNKIDAVDRETVDLEALATQLNHLSYAPVFIISAVTRTGLEPMLQEIWGILDQMKVPEEVEALR</sequence>
<organism>
    <name type="scientific">Nostoc punctiforme (strain ATCC 29133 / PCC 73102)</name>
    <dbReference type="NCBI Taxonomy" id="63737"/>
    <lineage>
        <taxon>Bacteria</taxon>
        <taxon>Bacillati</taxon>
        <taxon>Cyanobacteriota</taxon>
        <taxon>Cyanophyceae</taxon>
        <taxon>Nostocales</taxon>
        <taxon>Nostocaceae</taxon>
        <taxon>Nostoc</taxon>
    </lineage>
</organism>
<feature type="chain" id="PRO_0000386097" description="GTPase Obg">
    <location>
        <begin position="1"/>
        <end position="342"/>
    </location>
</feature>
<feature type="domain" description="Obg" evidence="2">
    <location>
        <begin position="1"/>
        <end position="159"/>
    </location>
</feature>
<feature type="domain" description="OBG-type G" evidence="1">
    <location>
        <begin position="160"/>
        <end position="330"/>
    </location>
</feature>
<feature type="binding site" evidence="1">
    <location>
        <begin position="166"/>
        <end position="173"/>
    </location>
    <ligand>
        <name>GTP</name>
        <dbReference type="ChEBI" id="CHEBI:37565"/>
    </ligand>
</feature>
<feature type="binding site" evidence="1">
    <location>
        <position position="173"/>
    </location>
    <ligand>
        <name>Mg(2+)</name>
        <dbReference type="ChEBI" id="CHEBI:18420"/>
    </ligand>
</feature>
<feature type="binding site" evidence="1">
    <location>
        <begin position="191"/>
        <end position="195"/>
    </location>
    <ligand>
        <name>GTP</name>
        <dbReference type="ChEBI" id="CHEBI:37565"/>
    </ligand>
</feature>
<feature type="binding site" evidence="1">
    <location>
        <position position="193"/>
    </location>
    <ligand>
        <name>Mg(2+)</name>
        <dbReference type="ChEBI" id="CHEBI:18420"/>
    </ligand>
</feature>
<feature type="binding site" evidence="1">
    <location>
        <begin position="213"/>
        <end position="216"/>
    </location>
    <ligand>
        <name>GTP</name>
        <dbReference type="ChEBI" id="CHEBI:37565"/>
    </ligand>
</feature>
<feature type="binding site" evidence="1">
    <location>
        <begin position="280"/>
        <end position="283"/>
    </location>
    <ligand>
        <name>GTP</name>
        <dbReference type="ChEBI" id="CHEBI:37565"/>
    </ligand>
</feature>
<feature type="binding site" evidence="1">
    <location>
        <begin position="311"/>
        <end position="313"/>
    </location>
    <ligand>
        <name>GTP</name>
        <dbReference type="ChEBI" id="CHEBI:37565"/>
    </ligand>
</feature>
<gene>
    <name evidence="1" type="primary">obg</name>
    <name type="ordered locus">Npun_F3262</name>
</gene>
<comment type="function">
    <text evidence="1">An essential GTPase which binds GTP, GDP and possibly (p)ppGpp with moderate affinity, with high nucleotide exchange rates and a fairly low GTP hydrolysis rate. Plays a role in control of the cell cycle, stress response, ribosome biogenesis and in those bacteria that undergo differentiation, in morphogenesis control.</text>
</comment>
<comment type="cofactor">
    <cofactor evidence="1">
        <name>Mg(2+)</name>
        <dbReference type="ChEBI" id="CHEBI:18420"/>
    </cofactor>
</comment>
<comment type="subunit">
    <text evidence="1">Monomer.</text>
</comment>
<comment type="subcellular location">
    <subcellularLocation>
        <location evidence="1">Cytoplasm</location>
    </subcellularLocation>
</comment>
<comment type="similarity">
    <text evidence="1">Belongs to the TRAFAC class OBG-HflX-like GTPase superfamily. OBG GTPase family.</text>
</comment>
<name>OBG_NOSP7</name>
<keyword id="KW-0963">Cytoplasm</keyword>
<keyword id="KW-0342">GTP-binding</keyword>
<keyword id="KW-0378">Hydrolase</keyword>
<keyword id="KW-0460">Magnesium</keyword>
<keyword id="KW-0479">Metal-binding</keyword>
<keyword id="KW-0547">Nucleotide-binding</keyword>
<keyword id="KW-1185">Reference proteome</keyword>
<protein>
    <recommendedName>
        <fullName evidence="1">GTPase Obg</fullName>
        <ecNumber evidence="1">3.6.5.-</ecNumber>
    </recommendedName>
    <alternativeName>
        <fullName evidence="1">GTP-binding protein Obg</fullName>
    </alternativeName>
</protein>
<evidence type="ECO:0000255" key="1">
    <source>
        <dbReference type="HAMAP-Rule" id="MF_01454"/>
    </source>
</evidence>
<evidence type="ECO:0000255" key="2">
    <source>
        <dbReference type="PROSITE-ProRule" id="PRU01231"/>
    </source>
</evidence>
<accession>B2IYX1</accession>
<dbReference type="EC" id="3.6.5.-" evidence="1"/>
<dbReference type="EMBL" id="CP001037">
    <property type="protein sequence ID" value="ACC81704.1"/>
    <property type="molecule type" value="Genomic_DNA"/>
</dbReference>
<dbReference type="SMR" id="B2IYX1"/>
<dbReference type="STRING" id="63737.Npun_F3262"/>
<dbReference type="EnsemblBacteria" id="ACC81704">
    <property type="protein sequence ID" value="ACC81704"/>
    <property type="gene ID" value="Npun_F3262"/>
</dbReference>
<dbReference type="KEGG" id="npu:Npun_F3262"/>
<dbReference type="eggNOG" id="COG0536">
    <property type="taxonomic scope" value="Bacteria"/>
</dbReference>
<dbReference type="HOGENOM" id="CLU_011747_2_0_3"/>
<dbReference type="OrthoDB" id="9807318at2"/>
<dbReference type="PhylomeDB" id="B2IYX1"/>
<dbReference type="Proteomes" id="UP000001191">
    <property type="component" value="Chromosome"/>
</dbReference>
<dbReference type="GO" id="GO:0005737">
    <property type="term" value="C:cytoplasm"/>
    <property type="evidence" value="ECO:0007669"/>
    <property type="project" value="UniProtKB-SubCell"/>
</dbReference>
<dbReference type="GO" id="GO:0005525">
    <property type="term" value="F:GTP binding"/>
    <property type="evidence" value="ECO:0007669"/>
    <property type="project" value="UniProtKB-UniRule"/>
</dbReference>
<dbReference type="GO" id="GO:0003924">
    <property type="term" value="F:GTPase activity"/>
    <property type="evidence" value="ECO:0007669"/>
    <property type="project" value="UniProtKB-UniRule"/>
</dbReference>
<dbReference type="GO" id="GO:0000287">
    <property type="term" value="F:magnesium ion binding"/>
    <property type="evidence" value="ECO:0007669"/>
    <property type="project" value="InterPro"/>
</dbReference>
<dbReference type="GO" id="GO:0042254">
    <property type="term" value="P:ribosome biogenesis"/>
    <property type="evidence" value="ECO:0007669"/>
    <property type="project" value="UniProtKB-UniRule"/>
</dbReference>
<dbReference type="CDD" id="cd01898">
    <property type="entry name" value="Obg"/>
    <property type="match status" value="1"/>
</dbReference>
<dbReference type="FunFam" id="2.70.210.12:FF:000001">
    <property type="entry name" value="GTPase Obg"/>
    <property type="match status" value="1"/>
</dbReference>
<dbReference type="Gene3D" id="2.70.210.12">
    <property type="entry name" value="GTP1/OBG domain"/>
    <property type="match status" value="1"/>
</dbReference>
<dbReference type="Gene3D" id="3.40.50.300">
    <property type="entry name" value="P-loop containing nucleotide triphosphate hydrolases"/>
    <property type="match status" value="1"/>
</dbReference>
<dbReference type="HAMAP" id="MF_01454">
    <property type="entry name" value="GTPase_Obg"/>
    <property type="match status" value="1"/>
</dbReference>
<dbReference type="InterPro" id="IPR031167">
    <property type="entry name" value="G_OBG"/>
</dbReference>
<dbReference type="InterPro" id="IPR006073">
    <property type="entry name" value="GTP-bd"/>
</dbReference>
<dbReference type="InterPro" id="IPR014100">
    <property type="entry name" value="GTP-bd_Obg/CgtA"/>
</dbReference>
<dbReference type="InterPro" id="IPR006169">
    <property type="entry name" value="GTP1_OBG_dom"/>
</dbReference>
<dbReference type="InterPro" id="IPR036726">
    <property type="entry name" value="GTP1_OBG_dom_sf"/>
</dbReference>
<dbReference type="InterPro" id="IPR045086">
    <property type="entry name" value="OBG_GTPase"/>
</dbReference>
<dbReference type="InterPro" id="IPR027417">
    <property type="entry name" value="P-loop_NTPase"/>
</dbReference>
<dbReference type="InterPro" id="IPR005225">
    <property type="entry name" value="Small_GTP-bd"/>
</dbReference>
<dbReference type="NCBIfam" id="TIGR02729">
    <property type="entry name" value="Obg_CgtA"/>
    <property type="match status" value="1"/>
</dbReference>
<dbReference type="NCBIfam" id="NF008955">
    <property type="entry name" value="PRK12297.1"/>
    <property type="match status" value="1"/>
</dbReference>
<dbReference type="NCBIfam" id="NF008956">
    <property type="entry name" value="PRK12299.1"/>
    <property type="match status" value="1"/>
</dbReference>
<dbReference type="NCBIfam" id="TIGR00231">
    <property type="entry name" value="small_GTP"/>
    <property type="match status" value="1"/>
</dbReference>
<dbReference type="PANTHER" id="PTHR11702">
    <property type="entry name" value="DEVELOPMENTALLY REGULATED GTP-BINDING PROTEIN-RELATED"/>
    <property type="match status" value="1"/>
</dbReference>
<dbReference type="PANTHER" id="PTHR11702:SF31">
    <property type="entry name" value="MITOCHONDRIAL RIBOSOME-ASSOCIATED GTPASE 2"/>
    <property type="match status" value="1"/>
</dbReference>
<dbReference type="Pfam" id="PF01018">
    <property type="entry name" value="GTP1_OBG"/>
    <property type="match status" value="1"/>
</dbReference>
<dbReference type="Pfam" id="PF01926">
    <property type="entry name" value="MMR_HSR1"/>
    <property type="match status" value="1"/>
</dbReference>
<dbReference type="PIRSF" id="PIRSF002401">
    <property type="entry name" value="GTP_bd_Obg/CgtA"/>
    <property type="match status" value="1"/>
</dbReference>
<dbReference type="PRINTS" id="PR00326">
    <property type="entry name" value="GTP1OBG"/>
</dbReference>
<dbReference type="SUPFAM" id="SSF82051">
    <property type="entry name" value="Obg GTP-binding protein N-terminal domain"/>
    <property type="match status" value="1"/>
</dbReference>
<dbReference type="SUPFAM" id="SSF52540">
    <property type="entry name" value="P-loop containing nucleoside triphosphate hydrolases"/>
    <property type="match status" value="1"/>
</dbReference>
<dbReference type="PROSITE" id="PS51710">
    <property type="entry name" value="G_OBG"/>
    <property type="match status" value="1"/>
</dbReference>
<dbReference type="PROSITE" id="PS51883">
    <property type="entry name" value="OBG"/>
    <property type="match status" value="1"/>
</dbReference>
<proteinExistence type="inferred from homology"/>